<reference key="1">
    <citation type="submission" date="2008-03" db="EMBL/GenBank/DDBJ databases">
        <authorList>
            <consortium name="NIH - Xenopus Gene Collection (XGC) project"/>
        </authorList>
    </citation>
    <scope>NUCLEOTIDE SEQUENCE [LARGE SCALE MRNA]</scope>
    <source>
        <tissue>Embryo</tissue>
    </source>
</reference>
<proteinExistence type="evidence at transcript level"/>
<protein>
    <recommendedName>
        <fullName>Poly(U)-specific endoribonuclease</fullName>
        <ecNumber evidence="2">4.6.1.-</ecNumber>
    </recommendedName>
    <alternativeName>
        <fullName>Protein endoU</fullName>
    </alternativeName>
    <alternativeName>
        <fullName>Uridylate-specific endoribonuclease</fullName>
    </alternativeName>
    <alternativeName>
        <fullName>XendoU</fullName>
    </alternativeName>
</protein>
<sequence length="293" mass="33919">MESNRTRGLNHELSKLFNELWDADENRMKAGKDYRISLQGKAGYVPAGSNQARDSASYPLFQFVDEEKLRSRKTFATFISLLDNYEMDTGVAEVVTPEEIAENNTFLDAILETKVMKIAHDYLVRKNQAKPSRNDFKAQLYTIWFQLYSRAPGQGPDSCGFEHVFVGESKRGKEIMGLHNWVQFYLQEKRKTIDYKGYVGRQNKSRPDHDDQVLNLQFSWKEMVKPIGSSFIGVSPEFEFALYTVVFLTSQEKMTREVVRVEEYEMQIVVNRHGRYIGTAYPVLLSTNNPDLY</sequence>
<evidence type="ECO:0000250" key="1"/>
<evidence type="ECO:0000250" key="2">
    <source>
        <dbReference type="UniProtKB" id="Q8JFY9"/>
    </source>
</evidence>
<evidence type="ECO:0000255" key="3">
    <source>
        <dbReference type="PROSITE-ProRule" id="PRU01304"/>
    </source>
</evidence>
<evidence type="ECO:0000305" key="4"/>
<keyword id="KW-0255">Endonuclease</keyword>
<keyword id="KW-0378">Hydrolase</keyword>
<keyword id="KW-0456">Lyase</keyword>
<keyword id="KW-0464">Manganese</keyword>
<keyword id="KW-0479">Metal-binding</keyword>
<keyword id="KW-0540">Nuclease</keyword>
<keyword id="KW-0539">Nucleus</keyword>
<keyword id="KW-1185">Reference proteome</keyword>
<keyword id="KW-0694">RNA-binding</keyword>
<organism>
    <name type="scientific">Xenopus tropicalis</name>
    <name type="common">Western clawed frog</name>
    <name type="synonym">Silurana tropicalis</name>
    <dbReference type="NCBI Taxonomy" id="8364"/>
    <lineage>
        <taxon>Eukaryota</taxon>
        <taxon>Metazoa</taxon>
        <taxon>Chordata</taxon>
        <taxon>Craniata</taxon>
        <taxon>Vertebrata</taxon>
        <taxon>Euteleostomi</taxon>
        <taxon>Amphibia</taxon>
        <taxon>Batrachia</taxon>
        <taxon>Anura</taxon>
        <taxon>Pipoidea</taxon>
        <taxon>Pipidae</taxon>
        <taxon>Xenopodinae</taxon>
        <taxon>Xenopus</taxon>
        <taxon>Silurana</taxon>
    </lineage>
</organism>
<gene>
    <name type="primary">endou</name>
</gene>
<comment type="function">
    <text evidence="2">Poly(U)-specific endoribonuclease involved in the processing of intron-encoded box C/D snoRNAs, such as U16 and U86. Releases products that have 2',3'-cyclic phosphate termini at the 3'-end.</text>
</comment>
<comment type="catalytic activity">
    <reaction evidence="2">
        <text>uridylyl-uridylyl-ribonucleotide-RNA = a 3'-end uridylyl-2',3'-cyclophospho-uridine-RNA + a 5'-end dephospho-ribonucleoside-RNA</text>
        <dbReference type="Rhea" id="RHEA:67732"/>
        <dbReference type="Rhea" id="RHEA-COMP:13936"/>
        <dbReference type="Rhea" id="RHEA-COMP:17334"/>
        <dbReference type="Rhea" id="RHEA-COMP:17335"/>
        <dbReference type="ChEBI" id="CHEBI:138284"/>
        <dbReference type="ChEBI" id="CHEBI:173079"/>
        <dbReference type="ChEBI" id="CHEBI:173080"/>
    </reaction>
    <physiologicalReaction direction="left-to-right" evidence="2">
        <dbReference type="Rhea" id="RHEA:67733"/>
    </physiologicalReaction>
</comment>
<comment type="cofactor">
    <cofactor evidence="1">
        <name>Mn(2+)</name>
        <dbReference type="ChEBI" id="CHEBI:29035"/>
    </cofactor>
</comment>
<comment type="subunit">
    <text evidence="1">Monomer.</text>
</comment>
<comment type="subcellular location">
    <subcellularLocation>
        <location evidence="1">Nucleus</location>
    </subcellularLocation>
</comment>
<comment type="similarity">
    <text evidence="4">Belongs to the ENDOU family.</text>
</comment>
<dbReference type="EC" id="4.6.1.-" evidence="2"/>
<dbReference type="EMBL" id="BC161355">
    <property type="protein sequence ID" value="AAI61355.1"/>
    <property type="molecule type" value="mRNA"/>
</dbReference>
<dbReference type="RefSeq" id="NP_001120485.1">
    <property type="nucleotide sequence ID" value="NM_001127013.1"/>
</dbReference>
<dbReference type="SMR" id="B1H3D5"/>
<dbReference type="STRING" id="8364.ENSXETP00000011297"/>
<dbReference type="PaxDb" id="8364-ENSXETP00000035990"/>
<dbReference type="GeneID" id="100145603"/>
<dbReference type="KEGG" id="xtr:100145603"/>
<dbReference type="AGR" id="Xenbase:XB-GENE-5883501"/>
<dbReference type="CTD" id="418221"/>
<dbReference type="Xenbase" id="XB-GENE-5883501">
    <property type="gene designation" value="endoul"/>
</dbReference>
<dbReference type="eggNOG" id="KOG2849">
    <property type="taxonomic scope" value="Eukaryota"/>
</dbReference>
<dbReference type="HOGENOM" id="CLU_048034_1_0_1"/>
<dbReference type="InParanoid" id="B1H3D5"/>
<dbReference type="OMA" id="ERNDGGW"/>
<dbReference type="OrthoDB" id="430326at2759"/>
<dbReference type="PhylomeDB" id="B1H3D5"/>
<dbReference type="TreeFam" id="TF319848"/>
<dbReference type="Proteomes" id="UP000008143">
    <property type="component" value="Chromosome 3"/>
</dbReference>
<dbReference type="Bgee" id="ENSXETG00000016505">
    <property type="expression patterns" value="Expressed in neurula embryo and 13 other cell types or tissues"/>
</dbReference>
<dbReference type="GO" id="GO:0005634">
    <property type="term" value="C:nucleus"/>
    <property type="evidence" value="ECO:0007669"/>
    <property type="project" value="UniProtKB-SubCell"/>
</dbReference>
<dbReference type="GO" id="GO:0016829">
    <property type="term" value="F:lyase activity"/>
    <property type="evidence" value="ECO:0007669"/>
    <property type="project" value="UniProtKB-KW"/>
</dbReference>
<dbReference type="GO" id="GO:0046872">
    <property type="term" value="F:metal ion binding"/>
    <property type="evidence" value="ECO:0007669"/>
    <property type="project" value="UniProtKB-KW"/>
</dbReference>
<dbReference type="GO" id="GO:0003723">
    <property type="term" value="F:RNA binding"/>
    <property type="evidence" value="ECO:0000250"/>
    <property type="project" value="UniProtKB"/>
</dbReference>
<dbReference type="GO" id="GO:0004521">
    <property type="term" value="F:RNA endonuclease activity"/>
    <property type="evidence" value="ECO:0000250"/>
    <property type="project" value="UniProtKB"/>
</dbReference>
<dbReference type="CDD" id="cd21159">
    <property type="entry name" value="XendoU"/>
    <property type="match status" value="1"/>
</dbReference>
<dbReference type="InterPro" id="IPR039787">
    <property type="entry name" value="ENDOU"/>
</dbReference>
<dbReference type="InterPro" id="IPR037227">
    <property type="entry name" value="EndoU-like"/>
</dbReference>
<dbReference type="InterPro" id="IPR018998">
    <property type="entry name" value="EndoU_C"/>
</dbReference>
<dbReference type="PANTHER" id="PTHR12439">
    <property type="entry name" value="PLACENTAL PROTEIN 11-RELATED"/>
    <property type="match status" value="1"/>
</dbReference>
<dbReference type="PANTHER" id="PTHR12439:SF11">
    <property type="entry name" value="URIDYLATE-SPECIFIC ENDORIBONUCLEASE"/>
    <property type="match status" value="1"/>
</dbReference>
<dbReference type="Pfam" id="PF09412">
    <property type="entry name" value="XendoU"/>
    <property type="match status" value="1"/>
</dbReference>
<dbReference type="SUPFAM" id="SSF142877">
    <property type="entry name" value="EndoU-like"/>
    <property type="match status" value="1"/>
</dbReference>
<dbReference type="PROSITE" id="PS51959">
    <property type="entry name" value="ENDOU"/>
    <property type="match status" value="1"/>
</dbReference>
<accession>B1H3D5</accession>
<feature type="chain" id="PRO_0000350629" description="Poly(U)-specific endoribonuclease">
    <location>
        <begin position="1"/>
        <end position="293"/>
    </location>
</feature>
<feature type="domain" description="EndoU" evidence="3">
    <location>
        <begin position="9"/>
        <end position="286"/>
    </location>
</feature>
<feature type="active site" evidence="3">
    <location>
        <position position="163"/>
    </location>
</feature>
<feature type="active site" evidence="3">
    <location>
        <position position="179"/>
    </location>
</feature>
<feature type="active site" evidence="3">
    <location>
        <position position="225"/>
    </location>
</feature>
<name>ENDOU_XENTR</name>